<name>MDHC_CHICK</name>
<evidence type="ECO:0000250" key="1"/>
<evidence type="ECO:0000250" key="2">
    <source>
        <dbReference type="UniProtKB" id="P11708"/>
    </source>
</evidence>
<evidence type="ECO:0000250" key="3">
    <source>
        <dbReference type="UniProtKB" id="P40925"/>
    </source>
</evidence>
<evidence type="ECO:0000305" key="4"/>
<reference key="1">
    <citation type="journal article" date="2005" name="Genome Biol.">
        <title>Full-length cDNAs from chicken bursal lymphocytes to facilitate gene function analysis.</title>
        <authorList>
            <person name="Caldwell R.B."/>
            <person name="Kierzek A.M."/>
            <person name="Arakawa H."/>
            <person name="Bezzubov Y."/>
            <person name="Zaim J."/>
            <person name="Fiedler P."/>
            <person name="Kutter S."/>
            <person name="Blagodatski A."/>
            <person name="Kostovska D."/>
            <person name="Koter M."/>
            <person name="Plachy J."/>
            <person name="Carninci P."/>
            <person name="Hayashizaki Y."/>
            <person name="Buerstedde J.-M."/>
        </authorList>
    </citation>
    <scope>NUCLEOTIDE SEQUENCE [LARGE SCALE MRNA]</scope>
    <source>
        <strain>CB</strain>
        <tissue>Bursa of Fabricius</tissue>
    </source>
</reference>
<accession>Q5ZME2</accession>
<protein>
    <recommendedName>
        <fullName>Malate dehydrogenase, cytoplasmic</fullName>
        <ecNumber>1.1.1.37</ecNumber>
    </recommendedName>
    <alternativeName>
        <fullName>Cytosolic malate dehydrogenase</fullName>
    </alternativeName>
</protein>
<comment type="function">
    <text evidence="3">Catalyzes the reduction of aromatic alpha-keto acids in the presence of NADH. Plays essential roles in the malate-aspartate shuttle and the tricarboxylic acid cycle, important in mitochondrial NADH supply for oxidative phosphorylation. Catalyzes the reduction of 2-oxoglutarate to 2-hydroxyglutarate, leading to elevated reactive oxygen species (ROS).</text>
</comment>
<comment type="catalytic activity">
    <reaction>
        <text>(S)-malate + NAD(+) = oxaloacetate + NADH + H(+)</text>
        <dbReference type="Rhea" id="RHEA:21432"/>
        <dbReference type="ChEBI" id="CHEBI:15378"/>
        <dbReference type="ChEBI" id="CHEBI:15589"/>
        <dbReference type="ChEBI" id="CHEBI:16452"/>
        <dbReference type="ChEBI" id="CHEBI:57540"/>
        <dbReference type="ChEBI" id="CHEBI:57945"/>
        <dbReference type="EC" id="1.1.1.37"/>
    </reaction>
</comment>
<comment type="catalytic activity">
    <reaction evidence="3">
        <text>(S)-2-hydroxyglutarate + NAD(+) = 2-oxoglutarate + NADH + H(+)</text>
        <dbReference type="Rhea" id="RHEA:57172"/>
        <dbReference type="ChEBI" id="CHEBI:15378"/>
        <dbReference type="ChEBI" id="CHEBI:16782"/>
        <dbReference type="ChEBI" id="CHEBI:16810"/>
        <dbReference type="ChEBI" id="CHEBI:57540"/>
        <dbReference type="ChEBI" id="CHEBI:57945"/>
    </reaction>
    <physiologicalReaction direction="right-to-left" evidence="3">
        <dbReference type="Rhea" id="RHEA:57174"/>
    </physiologicalReaction>
</comment>
<comment type="subunit">
    <text evidence="2">Homodimer.</text>
</comment>
<comment type="subcellular location">
    <subcellularLocation>
        <location evidence="3">Cytoplasm</location>
        <location evidence="3">Cytosol</location>
    </subcellularLocation>
</comment>
<comment type="similarity">
    <text evidence="4">Belongs to the LDH/MDH superfamily. MDH type 2 family.</text>
</comment>
<sequence>MGEPIRVLVTGAAGQIAYSLLYSIAKGDVFGKEQPLVLVLLDITPMMTVLEGVVMELQDCALPLLREVIPTDKEEVAFKDLDIAILVGSMPRREGMERKDLLKANVKIFKSQGAALDKYAKKTVKVVVVGNPANTNCLIASKSAPSIPKENFSCLTRLDHNRAKSQIALKLGVTSNDVKNVIIWGNHSSTQYPDVNHAKVNVKGKEVGVYEAIKDDSWLKGDFILTVQQRGAAVIKARKLSSAMSAAKAICDHVRDIWFGTPAGEFVSMGVISDGNSYGVPEDLLYSFPVVIKDKTWKFVEGLPINDFSREKMDLTAKELTEEKETAVEFLSSA</sequence>
<proteinExistence type="evidence at transcript level"/>
<feature type="chain" id="PRO_0000226738" description="Malate dehydrogenase, cytoplasmic">
    <location>
        <begin position="1"/>
        <end position="334"/>
    </location>
</feature>
<feature type="active site" description="Proton acceptor" evidence="1">
    <location>
        <position position="187"/>
    </location>
</feature>
<feature type="binding site" evidence="1">
    <location>
        <begin position="11"/>
        <end position="17"/>
    </location>
    <ligand>
        <name>NAD(+)</name>
        <dbReference type="ChEBI" id="CHEBI:57540"/>
    </ligand>
</feature>
<feature type="binding site" evidence="1">
    <location>
        <position position="92"/>
    </location>
    <ligand>
        <name>substrate</name>
    </ligand>
</feature>
<feature type="binding site" evidence="1">
    <location>
        <position position="98"/>
    </location>
    <ligand>
        <name>substrate</name>
    </ligand>
</feature>
<feature type="binding site" evidence="1">
    <location>
        <position position="105"/>
    </location>
    <ligand>
        <name>NAD(+)</name>
        <dbReference type="ChEBI" id="CHEBI:57540"/>
    </ligand>
</feature>
<feature type="binding site" evidence="1">
    <location>
        <position position="112"/>
    </location>
    <ligand>
        <name>NAD(+)</name>
        <dbReference type="ChEBI" id="CHEBI:57540"/>
    </ligand>
</feature>
<feature type="binding site" evidence="1">
    <location>
        <begin position="129"/>
        <end position="131"/>
    </location>
    <ligand>
        <name>NAD(+)</name>
        <dbReference type="ChEBI" id="CHEBI:57540"/>
    </ligand>
</feature>
<feature type="binding site" evidence="1">
    <location>
        <position position="131"/>
    </location>
    <ligand>
        <name>substrate</name>
    </ligand>
</feature>
<feature type="binding site" evidence="1">
    <location>
        <position position="162"/>
    </location>
    <ligand>
        <name>substrate</name>
    </ligand>
</feature>
<dbReference type="EC" id="1.1.1.37"/>
<dbReference type="EMBL" id="AJ719442">
    <property type="protein sequence ID" value="CAG31101.1"/>
    <property type="molecule type" value="mRNA"/>
</dbReference>
<dbReference type="RefSeq" id="NP_001006395.1">
    <property type="nucleotide sequence ID" value="NM_001006395.3"/>
</dbReference>
<dbReference type="SMR" id="Q5ZME2"/>
<dbReference type="BioGRID" id="682121">
    <property type="interactions" value="1"/>
</dbReference>
<dbReference type="FunCoup" id="Q5ZME2">
    <property type="interactions" value="2303"/>
</dbReference>
<dbReference type="IntAct" id="Q5ZME2">
    <property type="interactions" value="1"/>
</dbReference>
<dbReference type="STRING" id="9031.ENSGALP00000014374"/>
<dbReference type="PaxDb" id="9031-ENSGALP00000014374"/>
<dbReference type="Ensembl" id="ENSGALT00000060054">
    <property type="protein sequence ID" value="ENSGALP00000051015"/>
    <property type="gene ID" value="ENSGALG00000008858"/>
</dbReference>
<dbReference type="Ensembl" id="ENSGALT00010040102.1">
    <property type="protein sequence ID" value="ENSGALP00010023245.1"/>
    <property type="gene ID" value="ENSGALG00010016624.1"/>
</dbReference>
<dbReference type="GeneID" id="421281"/>
<dbReference type="KEGG" id="gga:421281"/>
<dbReference type="CTD" id="4190"/>
<dbReference type="VEuPathDB" id="HostDB:geneid_421281"/>
<dbReference type="eggNOG" id="KOG1496">
    <property type="taxonomic scope" value="Eukaryota"/>
</dbReference>
<dbReference type="GeneTree" id="ENSGT00530000063410"/>
<dbReference type="HOGENOM" id="CLU_040727_2_0_1"/>
<dbReference type="InParanoid" id="Q5ZME2"/>
<dbReference type="OMA" id="HTWVNGT"/>
<dbReference type="OrthoDB" id="4069699at2759"/>
<dbReference type="PhylomeDB" id="Q5ZME2"/>
<dbReference type="TreeFam" id="TF105826"/>
<dbReference type="Reactome" id="R-GGA-352875">
    <property type="pathway name" value="Gluconeogenesis"/>
</dbReference>
<dbReference type="PRO" id="PR:Q5ZME2"/>
<dbReference type="Proteomes" id="UP000000539">
    <property type="component" value="Chromosome 3"/>
</dbReference>
<dbReference type="GO" id="GO:0005829">
    <property type="term" value="C:cytosol"/>
    <property type="evidence" value="ECO:0000304"/>
    <property type="project" value="Reactome"/>
</dbReference>
<dbReference type="GO" id="GO:0005615">
    <property type="term" value="C:extracellular space"/>
    <property type="evidence" value="ECO:0000314"/>
    <property type="project" value="AgBase"/>
</dbReference>
<dbReference type="GO" id="GO:0030060">
    <property type="term" value="F:L-malate dehydrogenase (NAD+) activity"/>
    <property type="evidence" value="ECO:0000304"/>
    <property type="project" value="Reactome"/>
</dbReference>
<dbReference type="GO" id="GO:0006094">
    <property type="term" value="P:gluconeogenesis"/>
    <property type="evidence" value="ECO:0000304"/>
    <property type="project" value="Reactome"/>
</dbReference>
<dbReference type="GO" id="GO:0006108">
    <property type="term" value="P:malate metabolic process"/>
    <property type="evidence" value="ECO:0007669"/>
    <property type="project" value="InterPro"/>
</dbReference>
<dbReference type="GO" id="GO:0006099">
    <property type="term" value="P:tricarboxylic acid cycle"/>
    <property type="evidence" value="ECO:0007669"/>
    <property type="project" value="UniProtKB-KW"/>
</dbReference>
<dbReference type="CDD" id="cd01336">
    <property type="entry name" value="MDH_cytoplasmic_cytosolic"/>
    <property type="match status" value="1"/>
</dbReference>
<dbReference type="FunFam" id="3.40.50.720:FF:000010">
    <property type="entry name" value="Malate dehydrogenase"/>
    <property type="match status" value="1"/>
</dbReference>
<dbReference type="FunFam" id="3.90.110.10:FF:000002">
    <property type="entry name" value="Malate dehydrogenase"/>
    <property type="match status" value="1"/>
</dbReference>
<dbReference type="Gene3D" id="3.90.110.10">
    <property type="entry name" value="Lactate dehydrogenase/glycoside hydrolase, family 4, C-terminal"/>
    <property type="match status" value="1"/>
</dbReference>
<dbReference type="Gene3D" id="3.40.50.720">
    <property type="entry name" value="NAD(P)-binding Rossmann-like Domain"/>
    <property type="match status" value="1"/>
</dbReference>
<dbReference type="HAMAP" id="MF_01517">
    <property type="entry name" value="Malate_dehydrog_2"/>
    <property type="match status" value="1"/>
</dbReference>
<dbReference type="InterPro" id="IPR001557">
    <property type="entry name" value="L-lactate/malate_DH"/>
</dbReference>
<dbReference type="InterPro" id="IPR022383">
    <property type="entry name" value="Lactate/malate_DH_C"/>
</dbReference>
<dbReference type="InterPro" id="IPR001236">
    <property type="entry name" value="Lactate/malate_DH_N"/>
</dbReference>
<dbReference type="InterPro" id="IPR015955">
    <property type="entry name" value="Lactate_DH/Glyco_Ohase_4_C"/>
</dbReference>
<dbReference type="InterPro" id="IPR001252">
    <property type="entry name" value="Malate_DH_AS"/>
</dbReference>
<dbReference type="InterPro" id="IPR011274">
    <property type="entry name" value="Malate_DH_NAD-dep_euk"/>
</dbReference>
<dbReference type="InterPro" id="IPR010945">
    <property type="entry name" value="Malate_DH_type2"/>
</dbReference>
<dbReference type="InterPro" id="IPR036291">
    <property type="entry name" value="NAD(P)-bd_dom_sf"/>
</dbReference>
<dbReference type="NCBIfam" id="TIGR01759">
    <property type="entry name" value="MalateDH-SF1"/>
    <property type="match status" value="1"/>
</dbReference>
<dbReference type="NCBIfam" id="TIGR01758">
    <property type="entry name" value="MDH_euk_cyt"/>
    <property type="match status" value="1"/>
</dbReference>
<dbReference type="NCBIfam" id="NF003916">
    <property type="entry name" value="PRK05442.1"/>
    <property type="match status" value="1"/>
</dbReference>
<dbReference type="PANTHER" id="PTHR23382">
    <property type="entry name" value="MALATE DEHYDROGENASE"/>
    <property type="match status" value="1"/>
</dbReference>
<dbReference type="Pfam" id="PF02866">
    <property type="entry name" value="Ldh_1_C"/>
    <property type="match status" value="1"/>
</dbReference>
<dbReference type="Pfam" id="PF00056">
    <property type="entry name" value="Ldh_1_N"/>
    <property type="match status" value="1"/>
</dbReference>
<dbReference type="PIRSF" id="PIRSF000102">
    <property type="entry name" value="Lac_mal_DH"/>
    <property type="match status" value="1"/>
</dbReference>
<dbReference type="SUPFAM" id="SSF56327">
    <property type="entry name" value="LDH C-terminal domain-like"/>
    <property type="match status" value="1"/>
</dbReference>
<dbReference type="SUPFAM" id="SSF51735">
    <property type="entry name" value="NAD(P)-binding Rossmann-fold domains"/>
    <property type="match status" value="1"/>
</dbReference>
<dbReference type="PROSITE" id="PS00068">
    <property type="entry name" value="MDH"/>
    <property type="match status" value="1"/>
</dbReference>
<gene>
    <name type="primary">MDH1</name>
    <name type="ORF">RCJMB04_2g5</name>
</gene>
<keyword id="KW-0963">Cytoplasm</keyword>
<keyword id="KW-0520">NAD</keyword>
<keyword id="KW-0560">Oxidoreductase</keyword>
<keyword id="KW-1185">Reference proteome</keyword>
<keyword id="KW-0816">Tricarboxylic acid cycle</keyword>
<organism>
    <name type="scientific">Gallus gallus</name>
    <name type="common">Chicken</name>
    <dbReference type="NCBI Taxonomy" id="9031"/>
    <lineage>
        <taxon>Eukaryota</taxon>
        <taxon>Metazoa</taxon>
        <taxon>Chordata</taxon>
        <taxon>Craniata</taxon>
        <taxon>Vertebrata</taxon>
        <taxon>Euteleostomi</taxon>
        <taxon>Archelosauria</taxon>
        <taxon>Archosauria</taxon>
        <taxon>Dinosauria</taxon>
        <taxon>Saurischia</taxon>
        <taxon>Theropoda</taxon>
        <taxon>Coelurosauria</taxon>
        <taxon>Aves</taxon>
        <taxon>Neognathae</taxon>
        <taxon>Galloanserae</taxon>
        <taxon>Galliformes</taxon>
        <taxon>Phasianidae</taxon>
        <taxon>Phasianinae</taxon>
        <taxon>Gallus</taxon>
    </lineage>
</organism>